<reference key="1">
    <citation type="journal article" date="1992" name="Yeast">
        <title>Sequence of the HMR region on chromosome III of Saccharomyces cerevisiae.</title>
        <authorList>
            <person name="Sor F."/>
            <person name="Cheret G."/>
            <person name="Fabre F."/>
            <person name="Faye G."/>
            <person name="Fukuhara H."/>
        </authorList>
    </citation>
    <scope>NUCLEOTIDE SEQUENCE [GENOMIC DNA]</scope>
</reference>
<reference key="2">
    <citation type="journal article" date="1992" name="Nature">
        <title>The complete DNA sequence of yeast chromosome III.</title>
        <authorList>
            <person name="Oliver S.G."/>
            <person name="van der Aart Q.J.M."/>
            <person name="Agostoni-Carbone M.L."/>
            <person name="Aigle M."/>
            <person name="Alberghina L."/>
            <person name="Alexandraki D."/>
            <person name="Antoine G."/>
            <person name="Anwar R."/>
            <person name="Ballesta J.P.G."/>
            <person name="Benit P."/>
            <person name="Berben G."/>
            <person name="Bergantino E."/>
            <person name="Biteau N."/>
            <person name="Bolle P.-A."/>
            <person name="Bolotin-Fukuhara M."/>
            <person name="Brown A."/>
            <person name="Brown A.J.P."/>
            <person name="Buhler J.-M."/>
            <person name="Carcano C."/>
            <person name="Carignani G."/>
            <person name="Cederberg H."/>
            <person name="Chanet R."/>
            <person name="Contreras R."/>
            <person name="Crouzet M."/>
            <person name="Daignan-Fornier B."/>
            <person name="Defoor E."/>
            <person name="Delgado M.D."/>
            <person name="Demolder J."/>
            <person name="Doira C."/>
            <person name="Dubois E."/>
            <person name="Dujon B."/>
            <person name="Duesterhoeft A."/>
            <person name="Erdmann D."/>
            <person name="Esteban M."/>
            <person name="Fabre F."/>
            <person name="Fairhead C."/>
            <person name="Faye G."/>
            <person name="Feldmann H."/>
            <person name="Fiers W."/>
            <person name="Francingues-Gaillard M.-C."/>
            <person name="Franco L."/>
            <person name="Frontali L."/>
            <person name="Fukuhara H."/>
            <person name="Fuller L.J."/>
            <person name="Galland P."/>
            <person name="Gent M.E."/>
            <person name="Gigot D."/>
            <person name="Gilliquet V."/>
            <person name="Glansdorff N."/>
            <person name="Goffeau A."/>
            <person name="Grenson M."/>
            <person name="Grisanti P."/>
            <person name="Grivell L.A."/>
            <person name="de Haan M."/>
            <person name="Haasemann M."/>
            <person name="Hatat D."/>
            <person name="Hoenicka J."/>
            <person name="Hegemann J.H."/>
            <person name="Herbert C.J."/>
            <person name="Hilger F."/>
            <person name="Hohmann S."/>
            <person name="Hollenberg C.P."/>
            <person name="Huse K."/>
            <person name="Iborra F."/>
            <person name="Indge K.J."/>
            <person name="Isono K."/>
            <person name="Jacq C."/>
            <person name="Jacquet M."/>
            <person name="James C.M."/>
            <person name="Jauniaux J.-C."/>
            <person name="Jia Y."/>
            <person name="Jimenez A."/>
            <person name="Kelly A."/>
            <person name="Kleinhans U."/>
            <person name="Kreisl P."/>
            <person name="Lanfranchi G."/>
            <person name="Lewis C."/>
            <person name="van der Linden C.G."/>
            <person name="Lucchini G."/>
            <person name="Lutzenkirchen K."/>
            <person name="Maat M.J."/>
            <person name="Mallet L."/>
            <person name="Mannhaupt G."/>
            <person name="Martegani E."/>
            <person name="Mathieu A."/>
            <person name="Maurer C.T.C."/>
            <person name="McConnell D."/>
            <person name="McKee R.A."/>
            <person name="Messenguy F."/>
            <person name="Mewes H.-W."/>
            <person name="Molemans F."/>
            <person name="Montague M.A."/>
            <person name="Muzi Falconi M."/>
            <person name="Navas L."/>
            <person name="Newlon C.S."/>
            <person name="Noone D."/>
            <person name="Pallier C."/>
            <person name="Panzeri L."/>
            <person name="Pearson B.M."/>
            <person name="Perea J."/>
            <person name="Philippsen P."/>
            <person name="Pierard A."/>
            <person name="Planta R.J."/>
            <person name="Plevani P."/>
            <person name="Poetsch B."/>
            <person name="Pohl F.M."/>
            <person name="Purnelle B."/>
            <person name="Ramezani Rad M."/>
            <person name="Rasmussen S.W."/>
            <person name="Raynal A."/>
            <person name="Remacha M.A."/>
            <person name="Richterich P."/>
            <person name="Roberts A.B."/>
            <person name="Rodriguez F."/>
            <person name="Sanz E."/>
            <person name="Schaaff-Gerstenschlaeger I."/>
            <person name="Scherens B."/>
            <person name="Schweitzer B."/>
            <person name="Shu Y."/>
            <person name="Skala J."/>
            <person name="Slonimski P.P."/>
            <person name="Sor F."/>
            <person name="Soustelle C."/>
            <person name="Spiegelberg R."/>
            <person name="Stateva L.I."/>
            <person name="Steensma H.Y."/>
            <person name="Steiner S."/>
            <person name="Thierry A."/>
            <person name="Thireos G."/>
            <person name="Tzermia M."/>
            <person name="Urrestarazu L.A."/>
            <person name="Valle G."/>
            <person name="Vetter I."/>
            <person name="van Vliet-Reedijk J.C."/>
            <person name="Voet M."/>
            <person name="Volckaert G."/>
            <person name="Vreken P."/>
            <person name="Wang H."/>
            <person name="Warmington J.R."/>
            <person name="von Wettstein D."/>
            <person name="Wicksteed B.L."/>
            <person name="Wilson C."/>
            <person name="Wurst H."/>
            <person name="Xu G."/>
            <person name="Yoshikawa A."/>
            <person name="Zimmermann F.K."/>
            <person name="Sgouros J.G."/>
        </authorList>
    </citation>
    <scope>NUCLEOTIDE SEQUENCE [LARGE SCALE GENOMIC DNA]</scope>
    <source>
        <strain>ATCC 204508 / S288c</strain>
    </source>
</reference>
<reference key="3">
    <citation type="journal article" date="2014" name="G3 (Bethesda)">
        <title>The reference genome sequence of Saccharomyces cerevisiae: Then and now.</title>
        <authorList>
            <person name="Engel S.R."/>
            <person name="Dietrich F.S."/>
            <person name="Fisk D.G."/>
            <person name="Binkley G."/>
            <person name="Balakrishnan R."/>
            <person name="Costanzo M.C."/>
            <person name="Dwight S.S."/>
            <person name="Hitz B.C."/>
            <person name="Karra K."/>
            <person name="Nash R.S."/>
            <person name="Weng S."/>
            <person name="Wong E.D."/>
            <person name="Lloyd P."/>
            <person name="Skrzypek M.S."/>
            <person name="Miyasato S.R."/>
            <person name="Simison M."/>
            <person name="Cherry J.M."/>
        </authorList>
    </citation>
    <scope>GENOME REANNOTATION</scope>
    <source>
        <strain>ATCC 204508 / S288c</strain>
    </source>
</reference>
<gene>
    <name type="primary">HMRA1</name>
    <name type="ordered locus">YCR097W</name>
    <name type="ORF">YCR97W</name>
</gene>
<keyword id="KW-0002">3D-structure</keyword>
<keyword id="KW-0238">DNA-binding</keyword>
<keyword id="KW-0371">Homeobox</keyword>
<keyword id="KW-0539">Nucleus</keyword>
<keyword id="KW-1185">Reference proteome</keyword>
<keyword id="KW-0804">Transcription</keyword>
<keyword id="KW-0805">Transcription regulation</keyword>
<accession>P0CY11</accession>
<accession>D6VR98</accession>
<accession>P01366</accession>
<accession>P09091</accession>
<accession>Q06724</accession>
<name>HMRA1_YEAST</name>
<sequence>MDDICSMAENINRTLFNILGTEIDEINLNTNNLYNFIMESNLTKVEQHTLHKNISNNRLEIYHHIKKEKSPKGKSSISPQARAFLEQVFRRKQSLNSKEKEEVAKKCGITPLQVRVWFINKRMRSK</sequence>
<protein>
    <recommendedName>
        <fullName>Silenced mating-type protein A1</fullName>
        <shortName>MATa1 protein</shortName>
    </recommendedName>
</protein>
<dbReference type="EMBL" id="X59720">
    <property type="protein sequence ID" value="CAA42252.1"/>
    <property type="molecule type" value="Genomic_DNA"/>
</dbReference>
<dbReference type="EMBL" id="BK006937">
    <property type="protein sequence ID" value="DAA07567.1"/>
    <property type="molecule type" value="Genomic_DNA"/>
</dbReference>
<dbReference type="PIR" id="A90983">
    <property type="entry name" value="JEBY1"/>
</dbReference>
<dbReference type="RefSeq" id="NP_010021.1">
    <property type="nucleotide sequence ID" value="NM_001178804.1"/>
</dbReference>
<dbReference type="PDB" id="1MH3">
    <property type="method" value="X-ray"/>
    <property type="resolution" value="2.10 A"/>
    <property type="chains" value="A=71-126"/>
</dbReference>
<dbReference type="PDB" id="1MH4">
    <property type="method" value="X-ray"/>
    <property type="resolution" value="2.30 A"/>
    <property type="chains" value="A=71-126"/>
</dbReference>
<dbReference type="PDBsum" id="1MH3"/>
<dbReference type="PDBsum" id="1MH4"/>
<dbReference type="BMRB" id="P0CY11"/>
<dbReference type="SMR" id="P0CY11"/>
<dbReference type="BioGRID" id="31069">
    <property type="interactions" value="28"/>
</dbReference>
<dbReference type="ComplexPortal" id="CPX-684">
    <property type="entry name" value="Mating-type MATalpha2-MATa1 complex"/>
</dbReference>
<dbReference type="DIP" id="DIP-2209N"/>
<dbReference type="FunCoup" id="P0CY11">
    <property type="interactions" value="284"/>
</dbReference>
<dbReference type="IntAct" id="P0CY11">
    <property type="interactions" value="1"/>
</dbReference>
<dbReference type="STRING" id="4932.YCR097W"/>
<dbReference type="PaxDb" id="4932-YCR097W"/>
<dbReference type="PeptideAtlas" id="P0CY11"/>
<dbReference type="EnsemblFungi" id="YCR097W_mRNA">
    <property type="protein sequence ID" value="YCR097W"/>
    <property type="gene ID" value="YCR097W"/>
</dbReference>
<dbReference type="GeneID" id="850459"/>
<dbReference type="KEGG" id="sce:YCR097W"/>
<dbReference type="AGR" id="SGD:S000000694"/>
<dbReference type="SGD" id="S000000694">
    <property type="gene designation" value="HMRA1"/>
</dbReference>
<dbReference type="VEuPathDB" id="FungiDB:YCR097W"/>
<dbReference type="eggNOG" id="ENOG502SCEX">
    <property type="taxonomic scope" value="Eukaryota"/>
</dbReference>
<dbReference type="HOGENOM" id="CLU_158788_0_0_1"/>
<dbReference type="InParanoid" id="P0CY11"/>
<dbReference type="OrthoDB" id="2109411at2759"/>
<dbReference type="BioCyc" id="YEAST:G3O-29391-MONOMER"/>
<dbReference type="BioGRID-ORCS" id="850459">
    <property type="hits" value="0 hits in 10 CRISPR screens"/>
</dbReference>
<dbReference type="EvolutionaryTrace" id="P0CY11"/>
<dbReference type="PRO" id="PR:P0CY11"/>
<dbReference type="Proteomes" id="UP000002311">
    <property type="component" value="Chromosome III"/>
</dbReference>
<dbReference type="RNAct" id="P0CY11">
    <property type="molecule type" value="protein"/>
</dbReference>
<dbReference type="GO" id="GO:0005634">
    <property type="term" value="C:nucleus"/>
    <property type="evidence" value="ECO:0000314"/>
    <property type="project" value="SGD"/>
</dbReference>
<dbReference type="GO" id="GO:0090571">
    <property type="term" value="C:RNA polymerase II transcription repressor complex"/>
    <property type="evidence" value="ECO:0000314"/>
    <property type="project" value="ComplexPortal"/>
</dbReference>
<dbReference type="GO" id="GO:0003677">
    <property type="term" value="F:DNA binding"/>
    <property type="evidence" value="ECO:0007669"/>
    <property type="project" value="UniProtKB-KW"/>
</dbReference>
<dbReference type="GO" id="GO:0000981">
    <property type="term" value="F:DNA-binding transcription factor activity, RNA polymerase II-specific"/>
    <property type="evidence" value="ECO:0007669"/>
    <property type="project" value="InterPro"/>
</dbReference>
<dbReference type="GO" id="GO:0003714">
    <property type="term" value="F:transcription corepressor activity"/>
    <property type="evidence" value="ECO:0000314"/>
    <property type="project" value="SGD"/>
</dbReference>
<dbReference type="GO" id="GO:0007532">
    <property type="term" value="P:regulation of mating-type specific transcription, DNA-templated"/>
    <property type="evidence" value="ECO:0000314"/>
    <property type="project" value="ComplexPortal"/>
</dbReference>
<dbReference type="CDD" id="cd00086">
    <property type="entry name" value="homeodomain"/>
    <property type="match status" value="1"/>
</dbReference>
<dbReference type="Gene3D" id="1.10.10.60">
    <property type="entry name" value="Homeodomain-like"/>
    <property type="match status" value="1"/>
</dbReference>
<dbReference type="InterPro" id="IPR001356">
    <property type="entry name" value="HD"/>
</dbReference>
<dbReference type="InterPro" id="IPR050762">
    <property type="entry name" value="HD-ZIP_Homeobox_LZ_Class_II"/>
</dbReference>
<dbReference type="InterPro" id="IPR017970">
    <property type="entry name" value="Homeobox_CS"/>
</dbReference>
<dbReference type="InterPro" id="IPR009057">
    <property type="entry name" value="Homeodomain-like_sf"/>
</dbReference>
<dbReference type="PANTHER" id="PTHR45714">
    <property type="entry name" value="HOMEOBOX-LEUCINE ZIPPER PROTEIN HAT14"/>
    <property type="match status" value="1"/>
</dbReference>
<dbReference type="PANTHER" id="PTHR45714:SF34">
    <property type="entry name" value="HOMEOBOX-LEUCINE ZIPPER PROTEIN HAT9"/>
    <property type="match status" value="1"/>
</dbReference>
<dbReference type="Pfam" id="PF00046">
    <property type="entry name" value="Homeodomain"/>
    <property type="match status" value="1"/>
</dbReference>
<dbReference type="SMART" id="SM00389">
    <property type="entry name" value="HOX"/>
    <property type="match status" value="1"/>
</dbReference>
<dbReference type="SUPFAM" id="SSF46689">
    <property type="entry name" value="Homeodomain-like"/>
    <property type="match status" value="1"/>
</dbReference>
<dbReference type="PROSITE" id="PS00027">
    <property type="entry name" value="HOMEOBOX_1"/>
    <property type="match status" value="1"/>
</dbReference>
<dbReference type="PROSITE" id="PS50071">
    <property type="entry name" value="HOMEOBOX_2"/>
    <property type="match status" value="1"/>
</dbReference>
<feature type="chain" id="PRO_0000410465" description="Silenced mating-type protein A1">
    <location>
        <begin position="1"/>
        <end position="126"/>
    </location>
</feature>
<feature type="DNA-binding region" description="Homeobox" evidence="1">
    <location>
        <begin position="70"/>
        <end position="126"/>
    </location>
</feature>
<feature type="helix" evidence="3">
    <location>
        <begin position="79"/>
        <end position="91"/>
    </location>
</feature>
<feature type="helix" evidence="3">
    <location>
        <begin position="97"/>
        <end position="107"/>
    </location>
</feature>
<feature type="helix" evidence="3">
    <location>
        <begin position="111"/>
        <end position="122"/>
    </location>
</feature>
<proteinExistence type="evidence at protein level"/>
<organism>
    <name type="scientific">Saccharomyces cerevisiae (strain ATCC 204508 / S288c)</name>
    <name type="common">Baker's yeast</name>
    <dbReference type="NCBI Taxonomy" id="559292"/>
    <lineage>
        <taxon>Eukaryota</taxon>
        <taxon>Fungi</taxon>
        <taxon>Dikarya</taxon>
        <taxon>Ascomycota</taxon>
        <taxon>Saccharomycotina</taxon>
        <taxon>Saccharomycetes</taxon>
        <taxon>Saccharomycetales</taxon>
        <taxon>Saccharomycetaceae</taxon>
        <taxon>Saccharomyces</taxon>
    </lineage>
</organism>
<evidence type="ECO:0000255" key="1">
    <source>
        <dbReference type="PROSITE-ProRule" id="PRU00108"/>
    </source>
</evidence>
<evidence type="ECO:0000305" key="2"/>
<evidence type="ECO:0007829" key="3">
    <source>
        <dbReference type="PDB" id="1MH3"/>
    </source>
</evidence>
<comment type="function">
    <text>Mating type proteins are sequence specific DNA-binding proteins that act as master switches in yeast differentiation by controlling gene expression in a cell type-specific fashion. Silenced copy of A1 at HMR.</text>
</comment>
<comment type="subcellular location">
    <subcellularLocation>
        <location>Nucleus</location>
    </subcellularLocation>
</comment>
<comment type="miscellaneous">
    <text>There are three genetic loci for mating type genes in S.cerevisiae. MAT is the expression locus that determines the mating type of the cell, whereas HML (containing HMLALPHA1 and HMLALPHA2) and HMR (containing HMRA1 and HMRA2) represent silenced repositories of mating type information. The mating type is determined by the MAT locus, which contains either a copy of HML or of HMR. Diploid cells are usually heterozygous for the MAT locus.</text>
</comment>
<comment type="similarity">
    <text evidence="2">Belongs to the MATA1 family.</text>
</comment>
<comment type="caution">
    <text evidence="2">There is no sequence for the expressed copy of A1 in strain S288c, because this strain is of mating type alpha. A sequence for the expressed copy of A1 can be found in other strains (AC P0CY10).</text>
</comment>